<dbReference type="EC" id="1.1.1.86" evidence="1"/>
<dbReference type="EMBL" id="CP000435">
    <property type="protein sequence ID" value="ABI45803.1"/>
    <property type="molecule type" value="Genomic_DNA"/>
</dbReference>
<dbReference type="RefSeq" id="WP_011618669.1">
    <property type="nucleotide sequence ID" value="NC_008319.1"/>
</dbReference>
<dbReference type="SMR" id="Q0IC80"/>
<dbReference type="STRING" id="64471.sync_0725"/>
<dbReference type="KEGG" id="syg:sync_0725"/>
<dbReference type="eggNOG" id="COG0059">
    <property type="taxonomic scope" value="Bacteria"/>
</dbReference>
<dbReference type="HOGENOM" id="CLU_033821_0_1_3"/>
<dbReference type="OrthoDB" id="9804088at2"/>
<dbReference type="UniPathway" id="UPA00047">
    <property type="reaction ID" value="UER00056"/>
</dbReference>
<dbReference type="UniPathway" id="UPA00049">
    <property type="reaction ID" value="UER00060"/>
</dbReference>
<dbReference type="Proteomes" id="UP000001961">
    <property type="component" value="Chromosome"/>
</dbReference>
<dbReference type="GO" id="GO:0005829">
    <property type="term" value="C:cytosol"/>
    <property type="evidence" value="ECO:0007669"/>
    <property type="project" value="TreeGrafter"/>
</dbReference>
<dbReference type="GO" id="GO:0004455">
    <property type="term" value="F:ketol-acid reductoisomerase activity"/>
    <property type="evidence" value="ECO:0007669"/>
    <property type="project" value="UniProtKB-UniRule"/>
</dbReference>
<dbReference type="GO" id="GO:0000287">
    <property type="term" value="F:magnesium ion binding"/>
    <property type="evidence" value="ECO:0007669"/>
    <property type="project" value="UniProtKB-UniRule"/>
</dbReference>
<dbReference type="GO" id="GO:0050661">
    <property type="term" value="F:NADP binding"/>
    <property type="evidence" value="ECO:0007669"/>
    <property type="project" value="InterPro"/>
</dbReference>
<dbReference type="GO" id="GO:0009097">
    <property type="term" value="P:isoleucine biosynthetic process"/>
    <property type="evidence" value="ECO:0007669"/>
    <property type="project" value="UniProtKB-UniRule"/>
</dbReference>
<dbReference type="GO" id="GO:0009099">
    <property type="term" value="P:L-valine biosynthetic process"/>
    <property type="evidence" value="ECO:0007669"/>
    <property type="project" value="UniProtKB-UniRule"/>
</dbReference>
<dbReference type="FunFam" id="3.40.50.720:FF:000023">
    <property type="entry name" value="Ketol-acid reductoisomerase (NADP(+))"/>
    <property type="match status" value="1"/>
</dbReference>
<dbReference type="Gene3D" id="6.10.240.10">
    <property type="match status" value="1"/>
</dbReference>
<dbReference type="Gene3D" id="3.40.50.720">
    <property type="entry name" value="NAD(P)-binding Rossmann-like Domain"/>
    <property type="match status" value="1"/>
</dbReference>
<dbReference type="HAMAP" id="MF_00435">
    <property type="entry name" value="IlvC"/>
    <property type="match status" value="1"/>
</dbReference>
<dbReference type="InterPro" id="IPR008927">
    <property type="entry name" value="6-PGluconate_DH-like_C_sf"/>
</dbReference>
<dbReference type="InterPro" id="IPR013023">
    <property type="entry name" value="KARI"/>
</dbReference>
<dbReference type="InterPro" id="IPR000506">
    <property type="entry name" value="KARI_C"/>
</dbReference>
<dbReference type="InterPro" id="IPR013116">
    <property type="entry name" value="KARI_N"/>
</dbReference>
<dbReference type="InterPro" id="IPR014359">
    <property type="entry name" value="KARI_prok"/>
</dbReference>
<dbReference type="InterPro" id="IPR036291">
    <property type="entry name" value="NAD(P)-bd_dom_sf"/>
</dbReference>
<dbReference type="NCBIfam" id="TIGR00465">
    <property type="entry name" value="ilvC"/>
    <property type="match status" value="1"/>
</dbReference>
<dbReference type="NCBIfam" id="NF004017">
    <property type="entry name" value="PRK05479.1"/>
    <property type="match status" value="1"/>
</dbReference>
<dbReference type="NCBIfam" id="NF009940">
    <property type="entry name" value="PRK13403.1"/>
    <property type="match status" value="1"/>
</dbReference>
<dbReference type="PANTHER" id="PTHR21371">
    <property type="entry name" value="KETOL-ACID REDUCTOISOMERASE, MITOCHONDRIAL"/>
    <property type="match status" value="1"/>
</dbReference>
<dbReference type="PANTHER" id="PTHR21371:SF1">
    <property type="entry name" value="KETOL-ACID REDUCTOISOMERASE, MITOCHONDRIAL"/>
    <property type="match status" value="1"/>
</dbReference>
<dbReference type="Pfam" id="PF01450">
    <property type="entry name" value="KARI_C"/>
    <property type="match status" value="1"/>
</dbReference>
<dbReference type="Pfam" id="PF07991">
    <property type="entry name" value="KARI_N"/>
    <property type="match status" value="1"/>
</dbReference>
<dbReference type="PIRSF" id="PIRSF000116">
    <property type="entry name" value="IlvC_gammaproteo"/>
    <property type="match status" value="1"/>
</dbReference>
<dbReference type="SUPFAM" id="SSF48179">
    <property type="entry name" value="6-phosphogluconate dehydrogenase C-terminal domain-like"/>
    <property type="match status" value="1"/>
</dbReference>
<dbReference type="SUPFAM" id="SSF51735">
    <property type="entry name" value="NAD(P)-binding Rossmann-fold domains"/>
    <property type="match status" value="1"/>
</dbReference>
<dbReference type="PROSITE" id="PS51851">
    <property type="entry name" value="KARI_C"/>
    <property type="match status" value="1"/>
</dbReference>
<dbReference type="PROSITE" id="PS51850">
    <property type="entry name" value="KARI_N"/>
    <property type="match status" value="1"/>
</dbReference>
<gene>
    <name evidence="1" type="primary">ilvC</name>
    <name type="ordered locus">sync_0725</name>
</gene>
<proteinExistence type="inferred from homology"/>
<sequence>MAQLFYDSDADLSLLSGKTVAIIGYGSQGHAHALNLKDSGVNVVVGLYAGSRSAEKAKADGLEVLSVADASAKADWIMVLLPDEFQKEVYEKEIAPHLSAGKVLSFAHGFNIRFELIKPPADVDVLMIAPKGPGHTVRWEYQNGQGVPALFAIEQDASGNARGLAMAYAKGIGGTRAGILETNFKEETETDLFGEQAVLCGGLSELVKAGFETLVEAGYQPELAYFECLHEVKLIVDLMVKGGLSSMRDSISNTAEYGDYVSGPRLITADTKAEMKRILSDIQDGTFAKNFVAECAAGKPEMNKVRARDAEHPIEKVGKGLRSMFSWLKAA</sequence>
<organism>
    <name type="scientific">Synechococcus sp. (strain CC9311)</name>
    <dbReference type="NCBI Taxonomy" id="64471"/>
    <lineage>
        <taxon>Bacteria</taxon>
        <taxon>Bacillati</taxon>
        <taxon>Cyanobacteriota</taxon>
        <taxon>Cyanophyceae</taxon>
        <taxon>Synechococcales</taxon>
        <taxon>Synechococcaceae</taxon>
        <taxon>Synechococcus</taxon>
    </lineage>
</organism>
<reference key="1">
    <citation type="journal article" date="2006" name="Proc. Natl. Acad. Sci. U.S.A.">
        <title>Genome sequence of Synechococcus CC9311: insights into adaptation to a coastal environment.</title>
        <authorList>
            <person name="Palenik B."/>
            <person name="Ren Q."/>
            <person name="Dupont C.L."/>
            <person name="Myers G.S."/>
            <person name="Heidelberg J.F."/>
            <person name="Badger J.H."/>
            <person name="Madupu R."/>
            <person name="Nelson W.C."/>
            <person name="Brinkac L.M."/>
            <person name="Dodson R.J."/>
            <person name="Durkin A.S."/>
            <person name="Daugherty S.C."/>
            <person name="Sullivan S.A."/>
            <person name="Khouri H."/>
            <person name="Mohamoud Y."/>
            <person name="Halpin R."/>
            <person name="Paulsen I.T."/>
        </authorList>
    </citation>
    <scope>NUCLEOTIDE SEQUENCE [LARGE SCALE GENOMIC DNA]</scope>
    <source>
        <strain>CC9311</strain>
    </source>
</reference>
<name>ILVC_SYNS3</name>
<keyword id="KW-0028">Amino-acid biosynthesis</keyword>
<keyword id="KW-0100">Branched-chain amino acid biosynthesis</keyword>
<keyword id="KW-0460">Magnesium</keyword>
<keyword id="KW-0479">Metal-binding</keyword>
<keyword id="KW-0521">NADP</keyword>
<keyword id="KW-0560">Oxidoreductase</keyword>
<keyword id="KW-1185">Reference proteome</keyword>
<protein>
    <recommendedName>
        <fullName evidence="1">Ketol-acid reductoisomerase (NADP(+))</fullName>
        <shortName evidence="1">KARI</shortName>
        <ecNumber evidence="1">1.1.1.86</ecNumber>
    </recommendedName>
    <alternativeName>
        <fullName evidence="1">Acetohydroxy-acid isomeroreductase</fullName>
        <shortName evidence="1">AHIR</shortName>
    </alternativeName>
    <alternativeName>
        <fullName evidence="1">Alpha-keto-beta-hydroxylacyl reductoisomerase</fullName>
    </alternativeName>
    <alternativeName>
        <fullName evidence="1">Ketol-acid reductoisomerase type 1</fullName>
    </alternativeName>
    <alternativeName>
        <fullName evidence="1">Ketol-acid reductoisomerase type I</fullName>
    </alternativeName>
</protein>
<feature type="chain" id="PRO_1000050585" description="Ketol-acid reductoisomerase (NADP(+))">
    <location>
        <begin position="1"/>
        <end position="331"/>
    </location>
</feature>
<feature type="domain" description="KARI N-terminal Rossmann" evidence="2">
    <location>
        <begin position="2"/>
        <end position="182"/>
    </location>
</feature>
<feature type="domain" description="KARI C-terminal knotted" evidence="3">
    <location>
        <begin position="183"/>
        <end position="328"/>
    </location>
</feature>
<feature type="active site" evidence="1">
    <location>
        <position position="108"/>
    </location>
</feature>
<feature type="binding site" evidence="1">
    <location>
        <begin position="25"/>
        <end position="28"/>
    </location>
    <ligand>
        <name>NADP(+)</name>
        <dbReference type="ChEBI" id="CHEBI:58349"/>
    </ligand>
</feature>
<feature type="binding site" evidence="1">
    <location>
        <position position="51"/>
    </location>
    <ligand>
        <name>NADP(+)</name>
        <dbReference type="ChEBI" id="CHEBI:58349"/>
    </ligand>
</feature>
<feature type="binding site" evidence="1">
    <location>
        <position position="53"/>
    </location>
    <ligand>
        <name>NADP(+)</name>
        <dbReference type="ChEBI" id="CHEBI:58349"/>
    </ligand>
</feature>
<feature type="binding site" evidence="1">
    <location>
        <begin position="83"/>
        <end position="86"/>
    </location>
    <ligand>
        <name>NADP(+)</name>
        <dbReference type="ChEBI" id="CHEBI:58349"/>
    </ligand>
</feature>
<feature type="binding site" evidence="1">
    <location>
        <position position="134"/>
    </location>
    <ligand>
        <name>NADP(+)</name>
        <dbReference type="ChEBI" id="CHEBI:58349"/>
    </ligand>
</feature>
<feature type="binding site" evidence="1">
    <location>
        <position position="191"/>
    </location>
    <ligand>
        <name>Mg(2+)</name>
        <dbReference type="ChEBI" id="CHEBI:18420"/>
        <label>1</label>
    </ligand>
</feature>
<feature type="binding site" evidence="1">
    <location>
        <position position="191"/>
    </location>
    <ligand>
        <name>Mg(2+)</name>
        <dbReference type="ChEBI" id="CHEBI:18420"/>
        <label>2</label>
    </ligand>
</feature>
<feature type="binding site" evidence="1">
    <location>
        <position position="195"/>
    </location>
    <ligand>
        <name>Mg(2+)</name>
        <dbReference type="ChEBI" id="CHEBI:18420"/>
        <label>1</label>
    </ligand>
</feature>
<feature type="binding site" evidence="1">
    <location>
        <position position="227"/>
    </location>
    <ligand>
        <name>Mg(2+)</name>
        <dbReference type="ChEBI" id="CHEBI:18420"/>
        <label>2</label>
    </ligand>
</feature>
<feature type="binding site" evidence="1">
    <location>
        <position position="231"/>
    </location>
    <ligand>
        <name>Mg(2+)</name>
        <dbReference type="ChEBI" id="CHEBI:18420"/>
        <label>2</label>
    </ligand>
</feature>
<feature type="binding site" evidence="1">
    <location>
        <position position="252"/>
    </location>
    <ligand>
        <name>substrate</name>
    </ligand>
</feature>
<accession>Q0IC80</accession>
<evidence type="ECO:0000255" key="1">
    <source>
        <dbReference type="HAMAP-Rule" id="MF_00435"/>
    </source>
</evidence>
<evidence type="ECO:0000255" key="2">
    <source>
        <dbReference type="PROSITE-ProRule" id="PRU01197"/>
    </source>
</evidence>
<evidence type="ECO:0000255" key="3">
    <source>
        <dbReference type="PROSITE-ProRule" id="PRU01198"/>
    </source>
</evidence>
<comment type="function">
    <text evidence="1">Involved in the biosynthesis of branched-chain amino acids (BCAA). Catalyzes an alkyl-migration followed by a ketol-acid reduction of (S)-2-acetolactate (S2AL) to yield (R)-2,3-dihydroxy-isovalerate. In the isomerase reaction, S2AL is rearranged via a Mg-dependent methyl migration to produce 3-hydroxy-3-methyl-2-ketobutyrate (HMKB). In the reductase reaction, this 2-ketoacid undergoes a metal-dependent reduction by NADPH to yield (R)-2,3-dihydroxy-isovalerate.</text>
</comment>
<comment type="catalytic activity">
    <reaction evidence="1">
        <text>(2R)-2,3-dihydroxy-3-methylbutanoate + NADP(+) = (2S)-2-acetolactate + NADPH + H(+)</text>
        <dbReference type="Rhea" id="RHEA:22068"/>
        <dbReference type="ChEBI" id="CHEBI:15378"/>
        <dbReference type="ChEBI" id="CHEBI:49072"/>
        <dbReference type="ChEBI" id="CHEBI:57783"/>
        <dbReference type="ChEBI" id="CHEBI:58349"/>
        <dbReference type="ChEBI" id="CHEBI:58476"/>
        <dbReference type="EC" id="1.1.1.86"/>
    </reaction>
</comment>
<comment type="catalytic activity">
    <reaction evidence="1">
        <text>(2R,3R)-2,3-dihydroxy-3-methylpentanoate + NADP(+) = (S)-2-ethyl-2-hydroxy-3-oxobutanoate + NADPH + H(+)</text>
        <dbReference type="Rhea" id="RHEA:13493"/>
        <dbReference type="ChEBI" id="CHEBI:15378"/>
        <dbReference type="ChEBI" id="CHEBI:49256"/>
        <dbReference type="ChEBI" id="CHEBI:49258"/>
        <dbReference type="ChEBI" id="CHEBI:57783"/>
        <dbReference type="ChEBI" id="CHEBI:58349"/>
        <dbReference type="EC" id="1.1.1.86"/>
    </reaction>
</comment>
<comment type="cofactor">
    <cofactor evidence="1">
        <name>Mg(2+)</name>
        <dbReference type="ChEBI" id="CHEBI:18420"/>
    </cofactor>
    <text evidence="1">Binds 2 magnesium ions per subunit.</text>
</comment>
<comment type="pathway">
    <text evidence="1">Amino-acid biosynthesis; L-isoleucine biosynthesis; L-isoleucine from 2-oxobutanoate: step 2/4.</text>
</comment>
<comment type="pathway">
    <text evidence="1">Amino-acid biosynthesis; L-valine biosynthesis; L-valine from pyruvate: step 2/4.</text>
</comment>
<comment type="similarity">
    <text evidence="1">Belongs to the ketol-acid reductoisomerase family.</text>
</comment>